<feature type="chain" id="PRO_0000429753" description="Cyclic di-GMP binding protein TDE_0214">
    <location>
        <begin position="1"/>
        <end position="314"/>
    </location>
</feature>
<feature type="domain" description="PilZ">
    <location>
        <begin position="146"/>
        <end position="234"/>
    </location>
</feature>
<feature type="region of interest" description="Disordered" evidence="1">
    <location>
        <begin position="288"/>
        <end position="314"/>
    </location>
</feature>
<feature type="compositionally biased region" description="Polar residues" evidence="1">
    <location>
        <begin position="288"/>
        <end position="300"/>
    </location>
</feature>
<sequence>MAFAASQQLNRYYNLYKNIDVTFSKEVVSTLNFEPKQVFVRCSGGQWPCIINSASMTKAKIICGKKSGFLARLRSGITSVNIRFAFFDTEGKDSLSFFVAAKLVGISSYEAGNQDLVLITFEYTQRAPDDLIEKLGILLEANINSQKRRNERVVITPEISRKIGLVEKGTVVYIDAVPRRCLIRDLSFSGAKILLVGIANFLINKEVILRFAFDDPQSVFGIKGKTVRTEPVEGRKDLVALAVQYYPKNIPMMYKMYLNKYFSVVRKPASDGFGDDFLEDVAPASSFTPVSSPIGTNTAPLTPPPADSAPEQIS</sequence>
<comment type="function">
    <text evidence="2">Cyclic-di-GMP binding protein that plays important roles in motility, chemotaxis, biofilm formation and virulence.</text>
</comment>
<comment type="disruption phenotype">
    <text evidence="2">Mutants are less motile, reverse more frequently than the wild-type cells, and form less biofilm. Invasiveness and ability to induce skin abscesses and host humoral immune responses are significantly attenuated.</text>
</comment>
<evidence type="ECO:0000256" key="1">
    <source>
        <dbReference type="SAM" id="MobiDB-lite"/>
    </source>
</evidence>
<evidence type="ECO:0000269" key="2">
    <source>
    </source>
</evidence>
<protein>
    <recommendedName>
        <fullName>Cyclic di-GMP binding protein TDE_0214</fullName>
    </recommendedName>
</protein>
<dbReference type="EMBL" id="AE017226">
    <property type="protein sequence ID" value="AAS10711.1"/>
    <property type="molecule type" value="Genomic_DNA"/>
</dbReference>
<dbReference type="RefSeq" id="NP_970830.1">
    <property type="nucleotide sequence ID" value="NC_002967.9"/>
</dbReference>
<dbReference type="RefSeq" id="WP_002681114.1">
    <property type="nucleotide sequence ID" value="NC_002967.9"/>
</dbReference>
<dbReference type="SMR" id="Q73R77"/>
<dbReference type="STRING" id="243275.TDE_0214"/>
<dbReference type="PaxDb" id="243275-TDE_0214"/>
<dbReference type="GeneID" id="2739371"/>
<dbReference type="KEGG" id="tde:TDE_0214"/>
<dbReference type="PATRIC" id="fig|243275.7.peg.208"/>
<dbReference type="eggNOG" id="ENOG502ZPJT">
    <property type="taxonomic scope" value="Bacteria"/>
</dbReference>
<dbReference type="HOGENOM" id="CLU_070336_0_0_12"/>
<dbReference type="OrthoDB" id="350778at2"/>
<dbReference type="PHI-base" id="PHI:4141"/>
<dbReference type="Proteomes" id="UP000008212">
    <property type="component" value="Chromosome"/>
</dbReference>
<dbReference type="GO" id="GO:0035438">
    <property type="term" value="F:cyclic-di-GMP binding"/>
    <property type="evidence" value="ECO:0007669"/>
    <property type="project" value="InterPro"/>
</dbReference>
<dbReference type="InterPro" id="IPR009875">
    <property type="entry name" value="PilZ_domain"/>
</dbReference>
<dbReference type="InterPro" id="IPR046853">
    <property type="entry name" value="PilZN3"/>
</dbReference>
<dbReference type="Pfam" id="PF07238">
    <property type="entry name" value="PilZ"/>
    <property type="match status" value="1"/>
</dbReference>
<dbReference type="Pfam" id="PF20424">
    <property type="entry name" value="PilZN3"/>
    <property type="match status" value="1"/>
</dbReference>
<gene>
    <name type="ordered locus">TDE_0214</name>
</gene>
<keyword id="KW-0973">c-di-GMP</keyword>
<keyword id="KW-1185">Reference proteome</keyword>
<name>CDGB_TREDE</name>
<proteinExistence type="evidence at protein level"/>
<accession>Q73R77</accession>
<reference key="1">
    <citation type="journal article" date="2004" name="Proc. Natl. Acad. Sci. U.S.A.">
        <title>Comparison of the genome of the oral pathogen Treponema denticola with other spirochete genomes.</title>
        <authorList>
            <person name="Seshadri R."/>
            <person name="Myers G.S.A."/>
            <person name="Tettelin H."/>
            <person name="Eisen J.A."/>
            <person name="Heidelberg J.F."/>
            <person name="Dodson R.J."/>
            <person name="Davidsen T.M."/>
            <person name="DeBoy R.T."/>
            <person name="Fouts D.E."/>
            <person name="Haft D.H."/>
            <person name="Selengut J."/>
            <person name="Ren Q."/>
            <person name="Brinkac L.M."/>
            <person name="Madupu R."/>
            <person name="Kolonay J.F."/>
            <person name="Durkin S.A."/>
            <person name="Daugherty S.C."/>
            <person name="Shetty J."/>
            <person name="Shvartsbeyn A."/>
            <person name="Gebregeorgis E."/>
            <person name="Geer K."/>
            <person name="Tsegaye G."/>
            <person name="Malek J.A."/>
            <person name="Ayodeji B."/>
            <person name="Shatsman S."/>
            <person name="McLeod M.P."/>
            <person name="Smajs D."/>
            <person name="Howell J.K."/>
            <person name="Pal S."/>
            <person name="Amin A."/>
            <person name="Vashisth P."/>
            <person name="McNeill T.Z."/>
            <person name="Xiang Q."/>
            <person name="Sodergren E."/>
            <person name="Baca E."/>
            <person name="Weinstock G.M."/>
            <person name="Norris S.J."/>
            <person name="Fraser C.M."/>
            <person name="Paulsen I.T."/>
        </authorList>
    </citation>
    <scope>NUCLEOTIDE SEQUENCE [LARGE SCALE GENOMIC DNA]</scope>
    <source>
        <strain>ATCC 35405 / DSM 14222 / CIP 103919 / JCM 8153 / KCTC 15104</strain>
    </source>
</reference>
<reference key="2">
    <citation type="journal article" date="2013" name="J. Bacteriol.">
        <title>Inactivation of cyclic Di-GMP binding protein TDE0214 affects the motility, biofilm formation, and virulence of Treponema denticola.</title>
        <authorList>
            <person name="Bian J."/>
            <person name="Liu X."/>
            <person name="Cheng Y.Q."/>
            <person name="Li C."/>
        </authorList>
    </citation>
    <scope>FUNCTION</scope>
    <scope>C-DI-GMP-BINDING</scope>
    <scope>DISRUPTION PHENOTYPE</scope>
    <source>
        <strain>ATCC 35405 / DSM 14222 / CIP 103919 / JCM 8153 / KCTC 15104</strain>
    </source>
</reference>
<organism>
    <name type="scientific">Treponema denticola (strain ATCC 35405 / DSM 14222 / CIP 103919 / JCM 8153 / KCTC 15104)</name>
    <dbReference type="NCBI Taxonomy" id="243275"/>
    <lineage>
        <taxon>Bacteria</taxon>
        <taxon>Pseudomonadati</taxon>
        <taxon>Spirochaetota</taxon>
        <taxon>Spirochaetia</taxon>
        <taxon>Spirochaetales</taxon>
        <taxon>Treponemataceae</taxon>
        <taxon>Treponema</taxon>
    </lineage>
</organism>